<dbReference type="EMBL" id="BC091300">
    <property type="protein sequence ID" value="AAH91300.1"/>
    <property type="molecule type" value="mRNA"/>
</dbReference>
<dbReference type="RefSeq" id="NP_001020193.1">
    <property type="nucleotide sequence ID" value="NM_001025022.1"/>
</dbReference>
<dbReference type="SMR" id="Q5BJW5"/>
<dbReference type="FunCoup" id="Q5BJW5">
    <property type="interactions" value="204"/>
</dbReference>
<dbReference type="STRING" id="10116.ENSRNOP00000045285"/>
<dbReference type="PhosphoSitePlus" id="Q5BJW5"/>
<dbReference type="PaxDb" id="10116-ENSRNOP00000045285"/>
<dbReference type="GeneID" id="362535"/>
<dbReference type="KEGG" id="rno:362535"/>
<dbReference type="UCSC" id="RGD:1308059">
    <property type="organism name" value="rat"/>
</dbReference>
<dbReference type="AGR" id="RGD:1308059"/>
<dbReference type="CTD" id="286343"/>
<dbReference type="RGD" id="1308059">
    <property type="gene designation" value="Lurap1l"/>
</dbReference>
<dbReference type="VEuPathDB" id="HostDB:ENSRNOG00000033740"/>
<dbReference type="eggNOG" id="ENOG502QU2C">
    <property type="taxonomic scope" value="Eukaryota"/>
</dbReference>
<dbReference type="HOGENOM" id="CLU_106332_1_0_1"/>
<dbReference type="InParanoid" id="Q5BJW5"/>
<dbReference type="OrthoDB" id="89729at9989"/>
<dbReference type="PhylomeDB" id="Q5BJW5"/>
<dbReference type="TreeFam" id="TF332089"/>
<dbReference type="PRO" id="PR:Q5BJW5"/>
<dbReference type="Proteomes" id="UP000002494">
    <property type="component" value="Chromosome 5"/>
</dbReference>
<dbReference type="Bgee" id="ENSRNOG00000033740">
    <property type="expression patterns" value="Expressed in stomach and 19 other cell types or tissues"/>
</dbReference>
<dbReference type="GO" id="GO:0043123">
    <property type="term" value="P:positive regulation of canonical NF-kappaB signal transduction"/>
    <property type="evidence" value="ECO:0007669"/>
    <property type="project" value="InterPro"/>
</dbReference>
<dbReference type="GO" id="GO:0009966">
    <property type="term" value="P:regulation of signal transduction"/>
    <property type="evidence" value="ECO:0000318"/>
    <property type="project" value="GO_Central"/>
</dbReference>
<dbReference type="InterPro" id="IPR039499">
    <property type="entry name" value="LURA1/LRA25"/>
</dbReference>
<dbReference type="InterPro" id="IPR037443">
    <property type="entry name" value="LURAP1"/>
</dbReference>
<dbReference type="PANTHER" id="PTHR33767">
    <property type="entry name" value="LEUCINE RICH ADAPTOR PROTEIN 1-LIKE"/>
    <property type="match status" value="1"/>
</dbReference>
<dbReference type="PANTHER" id="PTHR33767:SF1">
    <property type="entry name" value="LEUCINE RICH ADAPTOR PROTEIN 1-LIKE"/>
    <property type="match status" value="1"/>
</dbReference>
<dbReference type="Pfam" id="PF14854">
    <property type="entry name" value="LURAP"/>
    <property type="match status" value="1"/>
</dbReference>
<proteinExistence type="evidence at transcript level"/>
<organism>
    <name type="scientific">Rattus norvegicus</name>
    <name type="common">Rat</name>
    <dbReference type="NCBI Taxonomy" id="10116"/>
    <lineage>
        <taxon>Eukaryota</taxon>
        <taxon>Metazoa</taxon>
        <taxon>Chordata</taxon>
        <taxon>Craniata</taxon>
        <taxon>Vertebrata</taxon>
        <taxon>Euteleostomi</taxon>
        <taxon>Mammalia</taxon>
        <taxon>Eutheria</taxon>
        <taxon>Euarchontoglires</taxon>
        <taxon>Glires</taxon>
        <taxon>Rodentia</taxon>
        <taxon>Myomorpha</taxon>
        <taxon>Muroidea</taxon>
        <taxon>Muridae</taxon>
        <taxon>Murinae</taxon>
        <taxon>Rattus</taxon>
    </lineage>
</organism>
<name>LUR1L_RAT</name>
<gene>
    <name type="primary">Lurap1l</name>
</gene>
<accession>Q5BJW5</accession>
<sequence>MEDGPLPDLRDIELKLGRKVPESLARSLRGEEPAPREGAADPSGVGGSCSSSSSCSSFAPSVSSSSSSSPASGSPRRSHPSALERLETKLHILRQEMVNLRATDVRLMRQLLLINESIESIKWMIEEKATVTSRGSSLSGSLCSLLESQSTSLRGSYNSLHDGSDGLDGISVGSYLDTLADDVPGHQTPSDLDQFSDSSIIEDSQALHKHPKLDSEYYCFG</sequence>
<evidence type="ECO:0000250" key="1">
    <source>
        <dbReference type="UniProtKB" id="Q8IV03"/>
    </source>
</evidence>
<evidence type="ECO:0000256" key="2">
    <source>
        <dbReference type="SAM" id="MobiDB-lite"/>
    </source>
</evidence>
<protein>
    <recommendedName>
        <fullName>Leucine rich adaptor protein 1-like</fullName>
    </recommendedName>
</protein>
<feature type="chain" id="PRO_0000089742" description="Leucine rich adaptor protein 1-like">
    <location>
        <begin position="1"/>
        <end position="221"/>
    </location>
</feature>
<feature type="region of interest" description="Disordered" evidence="2">
    <location>
        <begin position="1"/>
        <end position="81"/>
    </location>
</feature>
<feature type="compositionally biased region" description="Basic and acidic residues" evidence="2">
    <location>
        <begin position="8"/>
        <end position="21"/>
    </location>
</feature>
<feature type="compositionally biased region" description="Basic and acidic residues" evidence="2">
    <location>
        <begin position="28"/>
        <end position="39"/>
    </location>
</feature>
<feature type="compositionally biased region" description="Low complexity" evidence="2">
    <location>
        <begin position="48"/>
        <end position="75"/>
    </location>
</feature>
<feature type="modified residue" description="N-acetylmethionine" evidence="1">
    <location>
        <position position="1"/>
    </location>
</feature>
<keyword id="KW-0007">Acetylation</keyword>
<keyword id="KW-1185">Reference proteome</keyword>
<reference key="1">
    <citation type="journal article" date="2004" name="Genome Res.">
        <title>The status, quality, and expansion of the NIH full-length cDNA project: the Mammalian Gene Collection (MGC).</title>
        <authorList>
            <consortium name="The MGC Project Team"/>
        </authorList>
    </citation>
    <scope>NUCLEOTIDE SEQUENCE [LARGE SCALE MRNA]</scope>
    <source>
        <tissue>Ovary</tissue>
    </source>
</reference>